<dbReference type="EMBL" id="U19730">
    <property type="protein sequence ID" value="AAA61815.1"/>
    <property type="status" value="ALT_INIT"/>
    <property type="molecule type" value="Genomic_DNA"/>
</dbReference>
<dbReference type="SMR" id="P45991"/>
<dbReference type="GO" id="GO:0030288">
    <property type="term" value="C:outer membrane-bounded periplasmic space"/>
    <property type="evidence" value="ECO:0007669"/>
    <property type="project" value="InterPro"/>
</dbReference>
<dbReference type="GO" id="GO:0071555">
    <property type="term" value="P:cell wall organization"/>
    <property type="evidence" value="ECO:0007669"/>
    <property type="project" value="InterPro"/>
</dbReference>
<dbReference type="GO" id="GO:0061077">
    <property type="term" value="P:chaperone-mediated protein folding"/>
    <property type="evidence" value="ECO:0007669"/>
    <property type="project" value="InterPro"/>
</dbReference>
<dbReference type="FunFam" id="2.60.40.10:FF:000458">
    <property type="entry name" value="Molecular chaperone FimC"/>
    <property type="match status" value="1"/>
</dbReference>
<dbReference type="Gene3D" id="2.60.40.10">
    <property type="entry name" value="Immunoglobulins"/>
    <property type="match status" value="2"/>
</dbReference>
<dbReference type="InterPro" id="IPR013783">
    <property type="entry name" value="Ig-like_fold"/>
</dbReference>
<dbReference type="InterPro" id="IPR008962">
    <property type="entry name" value="PapD-like_sf"/>
</dbReference>
<dbReference type="InterPro" id="IPR050643">
    <property type="entry name" value="Periplasmic_pilus_chap"/>
</dbReference>
<dbReference type="InterPro" id="IPR036316">
    <property type="entry name" value="Pili_assmbl_chap_C_dom_sf"/>
</dbReference>
<dbReference type="InterPro" id="IPR001829">
    <property type="entry name" value="Pili_assmbl_chaperone_bac"/>
</dbReference>
<dbReference type="InterPro" id="IPR016148">
    <property type="entry name" value="Pili_assmbl_chaperone_C"/>
</dbReference>
<dbReference type="InterPro" id="IPR018046">
    <property type="entry name" value="Pili_assmbl_chaperone_CS"/>
</dbReference>
<dbReference type="InterPro" id="IPR016147">
    <property type="entry name" value="Pili_assmbl_chaperone_N"/>
</dbReference>
<dbReference type="PANTHER" id="PTHR30251:SF2">
    <property type="entry name" value="FIMBRIAL CHAPERONE YADV-RELATED"/>
    <property type="match status" value="1"/>
</dbReference>
<dbReference type="PANTHER" id="PTHR30251">
    <property type="entry name" value="PILUS ASSEMBLY CHAPERONE"/>
    <property type="match status" value="1"/>
</dbReference>
<dbReference type="Pfam" id="PF02753">
    <property type="entry name" value="PapD_C"/>
    <property type="match status" value="1"/>
</dbReference>
<dbReference type="Pfam" id="PF00345">
    <property type="entry name" value="PapD_N"/>
    <property type="match status" value="1"/>
</dbReference>
<dbReference type="PRINTS" id="PR00969">
    <property type="entry name" value="CHAPERONPILI"/>
</dbReference>
<dbReference type="SUPFAM" id="SSF49354">
    <property type="entry name" value="PapD-like"/>
    <property type="match status" value="1"/>
</dbReference>
<dbReference type="SUPFAM" id="SSF49584">
    <property type="entry name" value="Periplasmic chaperone C-domain"/>
    <property type="match status" value="1"/>
</dbReference>
<dbReference type="PROSITE" id="PS00635">
    <property type="entry name" value="PILI_CHAPERONE"/>
    <property type="match status" value="1"/>
</dbReference>
<name>HIFB2_HAEIF</name>
<gene>
    <name type="primary">hifB</name>
</gene>
<proteinExistence type="inferred from homology"/>
<evidence type="ECO:0000255" key="1"/>
<evidence type="ECO:0000305" key="2"/>
<reference key="1">
    <citation type="submission" date="1995-01" db="EMBL/GenBank/DDBJ databases">
        <authorList>
            <person name="Green B.A."/>
            <person name="Olmsted S.B."/>
        </authorList>
    </citation>
    <scope>NUCLEOTIDE SEQUENCE [GENOMIC DNA]</scope>
    <source>
        <strain>86-0295 / LKP serotype 1</strain>
    </source>
</reference>
<comment type="function">
    <text>Mediates assembly of pili by forming soluble multimeric complexes with pili subunits as an intermediate step in the assembly process. This protein is involved in type B pili (HifA) assembly.</text>
</comment>
<comment type="subcellular location">
    <subcellularLocation>
        <location>Periplasm</location>
    </subcellularLocation>
</comment>
<comment type="similarity">
    <text evidence="2">Belongs to the periplasmic pilus chaperone family.</text>
</comment>
<comment type="sequence caution" evidence="2">
    <conflict type="erroneous initiation">
        <sequence resource="EMBL-CDS" id="AAA61815"/>
    </conflict>
</comment>
<keyword id="KW-0143">Chaperone</keyword>
<keyword id="KW-1029">Fimbrium biogenesis</keyword>
<keyword id="KW-0393">Immunoglobulin domain</keyword>
<keyword id="KW-0574">Periplasm</keyword>
<keyword id="KW-0732">Signal</keyword>
<organism>
    <name type="scientific">Haemophilus influenzae</name>
    <dbReference type="NCBI Taxonomy" id="727"/>
    <lineage>
        <taxon>Bacteria</taxon>
        <taxon>Pseudomonadati</taxon>
        <taxon>Pseudomonadota</taxon>
        <taxon>Gammaproteobacteria</taxon>
        <taxon>Pasteurellales</taxon>
        <taxon>Pasteurellaceae</taxon>
        <taxon>Haemophilus</taxon>
    </lineage>
</organism>
<accession>P45991</accession>
<protein>
    <recommendedName>
        <fullName>Chaperone protein HifB</fullName>
    </recommendedName>
</protein>
<feature type="signal peptide" evidence="1">
    <location>
        <begin position="1"/>
        <end position="27"/>
    </location>
</feature>
<feature type="chain" id="PRO_0000009280" description="Chaperone protein HifB">
    <location>
        <begin position="28"/>
        <end position="241"/>
    </location>
</feature>
<sequence>MGKTMFKKTLLFFTALFFAALCAFSANADVIITGTRVIYPAGQKNVIVKLENNDDSAALVQAWIDNGNPNADPKYTKTPFVITPPVARVEAKSGQSLRITFTGSEPLPDDRESLFYFNLLDIPPKPDAAFLAKHGSFMQIAIRSRLKLFYRPAKLSMDSRDAMKKVVFKATPEGVLVDNQTPYYMNYIGLLHQNKPAKNVKMVAPFSQAVFEAKGVRSGDKLKWVLVNDYGADQEGEAIAQ</sequence>